<name>XERC_ECOL6</name>
<protein>
    <recommendedName>
        <fullName>Tyrosine recombinase XerC</fullName>
    </recommendedName>
</protein>
<feature type="chain" id="PRO_0000095295" description="Tyrosine recombinase XerC">
    <location>
        <begin position="1"/>
        <end position="298"/>
    </location>
</feature>
<feature type="domain" description="Core-binding (CB)" evidence="3">
    <location>
        <begin position="2"/>
        <end position="88"/>
    </location>
</feature>
<feature type="domain" description="Tyr recombinase" evidence="2">
    <location>
        <begin position="109"/>
        <end position="288"/>
    </location>
</feature>
<feature type="active site" evidence="2">
    <location>
        <position position="148"/>
    </location>
</feature>
<feature type="active site" evidence="2">
    <location>
        <position position="172"/>
    </location>
</feature>
<feature type="active site" evidence="2">
    <location>
        <position position="240"/>
    </location>
</feature>
<feature type="active site" evidence="2">
    <location>
        <position position="243"/>
    </location>
</feature>
<feature type="active site" evidence="2">
    <location>
        <position position="266"/>
    </location>
</feature>
<feature type="active site" description="O-(3'-phospho-DNA)-tyrosine intermediate" evidence="2">
    <location>
        <position position="275"/>
    </location>
</feature>
<gene>
    <name type="primary">xerC</name>
    <name type="ordered locus">c4732</name>
</gene>
<accession>P0A8P7</accession>
<accession>P22885</accession>
<proteinExistence type="inferred from homology"/>
<keyword id="KW-0131">Cell cycle</keyword>
<keyword id="KW-0132">Cell division</keyword>
<keyword id="KW-0159">Chromosome partition</keyword>
<keyword id="KW-0963">Cytoplasm</keyword>
<keyword id="KW-0229">DNA integration</keyword>
<keyword id="KW-0233">DNA recombination</keyword>
<keyword id="KW-0238">DNA-binding</keyword>
<keyword id="KW-1185">Reference proteome</keyword>
<sequence length="298" mass="33868">MTDLHTDVERYLRYLSVERQLSPITLLNYQRQLEAIINFASENGLQSWQQCDVTMVRNFAVRSRRKGLGAASLALRLSALRSFFDWLVSQNELKANPAKGVSAPKAPRHLPKNIDVDDMNRLLDIDINDPLAVRDRAMLEVMYGAGLRLSELVGLDIKHLDLESGEVWVMGKGSKERRLPIGRNAVAWIEHWLDLRDLFGSEDDALFLSKLGKRISARNVQKRFAEWGIKQGLNNHVHPHKLRHSFATHMLESSGDLRGVQELLGHANLSTTQIYTHLDFQHLASVYDAAHPRAKRGK</sequence>
<evidence type="ECO:0000250" key="1"/>
<evidence type="ECO:0000255" key="2">
    <source>
        <dbReference type="PROSITE-ProRule" id="PRU01246"/>
    </source>
</evidence>
<evidence type="ECO:0000255" key="3">
    <source>
        <dbReference type="PROSITE-ProRule" id="PRU01248"/>
    </source>
</evidence>
<evidence type="ECO:0000305" key="4"/>
<comment type="function">
    <text evidence="1">Site-specific tyrosine recombinase, which acts by catalyzing the cutting and rejoining of the recombining DNA molecules. Binds cooperatively to specific DNA consensus sequences that are separated from XerD binding sites by a short central region, forming the heterotetrameric XerC-XerD complex that recombines DNA substrates. The complex is essential to convert dimers of the bacterial chromosome into monomers to permit their segregation at cell division. It also contributes to the segregational stability of plasmids. In the complex XerC specifically exchanges the top DNA strands (By similarity).</text>
</comment>
<comment type="activity regulation">
    <text evidence="1">FtsK may regulate the catalytic switch between XerC and XerD in the heterotetrameric complex during the two steps of the recombination process.</text>
</comment>
<comment type="subunit">
    <text evidence="1">Forms a cyclic heterotetrameric complex composed of two molecules of XerC and two molecules of XerD, in which XerC interacts with XerD via its C-terminal region, XerD interacts with XerC via its C-terminal region and so on.</text>
</comment>
<comment type="subcellular location">
    <subcellularLocation>
        <location evidence="1">Cytoplasm</location>
    </subcellularLocation>
</comment>
<comment type="similarity">
    <text evidence="4">Belongs to the 'phage' integrase family. XerC subfamily.</text>
</comment>
<reference key="1">
    <citation type="journal article" date="2002" name="Proc. Natl. Acad. Sci. U.S.A.">
        <title>Extensive mosaic structure revealed by the complete genome sequence of uropathogenic Escherichia coli.</title>
        <authorList>
            <person name="Welch R.A."/>
            <person name="Burland V."/>
            <person name="Plunkett G. III"/>
            <person name="Redford P."/>
            <person name="Roesch P."/>
            <person name="Rasko D."/>
            <person name="Buckles E.L."/>
            <person name="Liou S.-R."/>
            <person name="Boutin A."/>
            <person name="Hackett J."/>
            <person name="Stroud D."/>
            <person name="Mayhew G.F."/>
            <person name="Rose D.J."/>
            <person name="Zhou S."/>
            <person name="Schwartz D.C."/>
            <person name="Perna N.T."/>
            <person name="Mobley H.L.T."/>
            <person name="Donnenberg M.S."/>
            <person name="Blattner F.R."/>
        </authorList>
    </citation>
    <scope>NUCLEOTIDE SEQUENCE [LARGE SCALE GENOMIC DNA]</scope>
    <source>
        <strain>CFT073 / ATCC 700928 / UPEC</strain>
    </source>
</reference>
<dbReference type="EMBL" id="AE014075">
    <property type="protein sequence ID" value="AAN83165.1"/>
    <property type="molecule type" value="Genomic_DNA"/>
</dbReference>
<dbReference type="RefSeq" id="WP_000130691.1">
    <property type="nucleotide sequence ID" value="NZ_CP051263.1"/>
</dbReference>
<dbReference type="SMR" id="P0A8P7"/>
<dbReference type="STRING" id="199310.c4732"/>
<dbReference type="GeneID" id="75059707"/>
<dbReference type="KEGG" id="ecc:c4732"/>
<dbReference type="eggNOG" id="COG4973">
    <property type="taxonomic scope" value="Bacteria"/>
</dbReference>
<dbReference type="HOGENOM" id="CLU_027562_9_0_6"/>
<dbReference type="BioCyc" id="ECOL199310:C4732-MONOMER"/>
<dbReference type="Proteomes" id="UP000001410">
    <property type="component" value="Chromosome"/>
</dbReference>
<dbReference type="GO" id="GO:0005737">
    <property type="term" value="C:cytoplasm"/>
    <property type="evidence" value="ECO:0007669"/>
    <property type="project" value="UniProtKB-SubCell"/>
</dbReference>
<dbReference type="GO" id="GO:0003677">
    <property type="term" value="F:DNA binding"/>
    <property type="evidence" value="ECO:0007669"/>
    <property type="project" value="UniProtKB-KW"/>
</dbReference>
<dbReference type="GO" id="GO:0009037">
    <property type="term" value="F:tyrosine-based site-specific recombinase activity"/>
    <property type="evidence" value="ECO:0007669"/>
    <property type="project" value="UniProtKB-UniRule"/>
</dbReference>
<dbReference type="GO" id="GO:0051301">
    <property type="term" value="P:cell division"/>
    <property type="evidence" value="ECO:0007669"/>
    <property type="project" value="UniProtKB-KW"/>
</dbReference>
<dbReference type="GO" id="GO:0007059">
    <property type="term" value="P:chromosome segregation"/>
    <property type="evidence" value="ECO:0007669"/>
    <property type="project" value="UniProtKB-UniRule"/>
</dbReference>
<dbReference type="GO" id="GO:0006313">
    <property type="term" value="P:DNA transposition"/>
    <property type="evidence" value="ECO:0007669"/>
    <property type="project" value="UniProtKB-UniRule"/>
</dbReference>
<dbReference type="CDD" id="cd00798">
    <property type="entry name" value="INT_XerDC_C"/>
    <property type="match status" value="1"/>
</dbReference>
<dbReference type="FunFam" id="1.10.443.10:FF:000002">
    <property type="entry name" value="Tyrosine recombinase XerC"/>
    <property type="match status" value="1"/>
</dbReference>
<dbReference type="Gene3D" id="1.10.150.130">
    <property type="match status" value="1"/>
</dbReference>
<dbReference type="Gene3D" id="1.10.443.10">
    <property type="entry name" value="Intergrase catalytic core"/>
    <property type="match status" value="1"/>
</dbReference>
<dbReference type="HAMAP" id="MF_01808">
    <property type="entry name" value="Recomb_XerC_XerD"/>
    <property type="match status" value="1"/>
</dbReference>
<dbReference type="InterPro" id="IPR044068">
    <property type="entry name" value="CB"/>
</dbReference>
<dbReference type="InterPro" id="IPR011010">
    <property type="entry name" value="DNA_brk_join_enz"/>
</dbReference>
<dbReference type="InterPro" id="IPR013762">
    <property type="entry name" value="Integrase-like_cat_sf"/>
</dbReference>
<dbReference type="InterPro" id="IPR002104">
    <property type="entry name" value="Integrase_catalytic"/>
</dbReference>
<dbReference type="InterPro" id="IPR010998">
    <property type="entry name" value="Integrase_recombinase_N"/>
</dbReference>
<dbReference type="InterPro" id="IPR004107">
    <property type="entry name" value="Integrase_SAM-like_N"/>
</dbReference>
<dbReference type="InterPro" id="IPR011931">
    <property type="entry name" value="Recomb_XerC"/>
</dbReference>
<dbReference type="InterPro" id="IPR023009">
    <property type="entry name" value="Tyrosine_recombinase_XerC/XerD"/>
</dbReference>
<dbReference type="InterPro" id="IPR050090">
    <property type="entry name" value="Tyrosine_recombinase_XerCD"/>
</dbReference>
<dbReference type="NCBIfam" id="NF001399">
    <property type="entry name" value="PRK00283.1"/>
    <property type="match status" value="1"/>
</dbReference>
<dbReference type="NCBIfam" id="TIGR02224">
    <property type="entry name" value="recomb_XerC"/>
    <property type="match status" value="1"/>
</dbReference>
<dbReference type="PANTHER" id="PTHR30349">
    <property type="entry name" value="PHAGE INTEGRASE-RELATED"/>
    <property type="match status" value="1"/>
</dbReference>
<dbReference type="PANTHER" id="PTHR30349:SF81">
    <property type="entry name" value="TYROSINE RECOMBINASE XERC"/>
    <property type="match status" value="1"/>
</dbReference>
<dbReference type="Pfam" id="PF02899">
    <property type="entry name" value="Phage_int_SAM_1"/>
    <property type="match status" value="1"/>
</dbReference>
<dbReference type="Pfam" id="PF00589">
    <property type="entry name" value="Phage_integrase"/>
    <property type="match status" value="1"/>
</dbReference>
<dbReference type="SUPFAM" id="SSF56349">
    <property type="entry name" value="DNA breaking-rejoining enzymes"/>
    <property type="match status" value="1"/>
</dbReference>
<dbReference type="SUPFAM" id="SSF47823">
    <property type="entry name" value="lambda integrase-like, N-terminal domain"/>
    <property type="match status" value="1"/>
</dbReference>
<dbReference type="PROSITE" id="PS51900">
    <property type="entry name" value="CB"/>
    <property type="match status" value="1"/>
</dbReference>
<dbReference type="PROSITE" id="PS51898">
    <property type="entry name" value="TYR_RECOMBINASE"/>
    <property type="match status" value="1"/>
</dbReference>
<organism>
    <name type="scientific">Escherichia coli O6:H1 (strain CFT073 / ATCC 700928 / UPEC)</name>
    <dbReference type="NCBI Taxonomy" id="199310"/>
    <lineage>
        <taxon>Bacteria</taxon>
        <taxon>Pseudomonadati</taxon>
        <taxon>Pseudomonadota</taxon>
        <taxon>Gammaproteobacteria</taxon>
        <taxon>Enterobacterales</taxon>
        <taxon>Enterobacteriaceae</taxon>
        <taxon>Escherichia</taxon>
    </lineage>
</organism>